<proteinExistence type="inferred from homology"/>
<evidence type="ECO:0000255" key="1">
    <source>
        <dbReference type="HAMAP-Rule" id="MF_01576"/>
    </source>
</evidence>
<feature type="chain" id="PRO_0000268505" description="Bifunctional protein FolD">
    <location>
        <begin position="1"/>
        <end position="316"/>
    </location>
</feature>
<feature type="binding site" evidence="1">
    <location>
        <begin position="165"/>
        <end position="167"/>
    </location>
    <ligand>
        <name>NADP(+)</name>
        <dbReference type="ChEBI" id="CHEBI:58349"/>
    </ligand>
</feature>
<feature type="binding site" evidence="1">
    <location>
        <position position="231"/>
    </location>
    <ligand>
        <name>NADP(+)</name>
        <dbReference type="ChEBI" id="CHEBI:58349"/>
    </ligand>
</feature>
<accession>Q8KN38</accession>
<comment type="function">
    <text evidence="1">Catalyzes the oxidation of 5,10-methylenetetrahydrofolate to 5,10-methenyltetrahydrofolate and then the hydrolysis of 5,10-methenyltetrahydrofolate to 10-formyltetrahydrofolate.</text>
</comment>
<comment type="catalytic activity">
    <reaction evidence="1">
        <text>(6R)-5,10-methylene-5,6,7,8-tetrahydrofolate + NADP(+) = (6R)-5,10-methenyltetrahydrofolate + NADPH</text>
        <dbReference type="Rhea" id="RHEA:22812"/>
        <dbReference type="ChEBI" id="CHEBI:15636"/>
        <dbReference type="ChEBI" id="CHEBI:57455"/>
        <dbReference type="ChEBI" id="CHEBI:57783"/>
        <dbReference type="ChEBI" id="CHEBI:58349"/>
        <dbReference type="EC" id="1.5.1.5"/>
    </reaction>
</comment>
<comment type="catalytic activity">
    <reaction evidence="1">
        <text>(6R)-5,10-methenyltetrahydrofolate + H2O = (6R)-10-formyltetrahydrofolate + H(+)</text>
        <dbReference type="Rhea" id="RHEA:23700"/>
        <dbReference type="ChEBI" id="CHEBI:15377"/>
        <dbReference type="ChEBI" id="CHEBI:15378"/>
        <dbReference type="ChEBI" id="CHEBI:57455"/>
        <dbReference type="ChEBI" id="CHEBI:195366"/>
        <dbReference type="EC" id="3.5.4.9"/>
    </reaction>
</comment>
<comment type="pathway">
    <text evidence="1">One-carbon metabolism; tetrahydrofolate interconversion.</text>
</comment>
<comment type="subunit">
    <text evidence="1">Homodimer.</text>
</comment>
<comment type="similarity">
    <text evidence="1">Belongs to the tetrahydrofolate dehydrogenase/cyclohydrolase family.</text>
</comment>
<organism>
    <name type="scientific">Sphingobium chlorophenolicum</name>
    <dbReference type="NCBI Taxonomy" id="46429"/>
    <lineage>
        <taxon>Bacteria</taxon>
        <taxon>Pseudomonadati</taxon>
        <taxon>Pseudomonadota</taxon>
        <taxon>Alphaproteobacteria</taxon>
        <taxon>Sphingomonadales</taxon>
        <taxon>Sphingomonadaceae</taxon>
        <taxon>Sphingobium</taxon>
    </lineage>
</organism>
<dbReference type="EC" id="1.5.1.5" evidence="1"/>
<dbReference type="EC" id="3.5.4.9" evidence="1"/>
<dbReference type="EMBL" id="AF512952">
    <property type="protein sequence ID" value="AAM96666.1"/>
    <property type="molecule type" value="Genomic_DNA"/>
</dbReference>
<dbReference type="SMR" id="Q8KN38"/>
<dbReference type="eggNOG" id="COG0190">
    <property type="taxonomic scope" value="Bacteria"/>
</dbReference>
<dbReference type="UniPathway" id="UPA00193"/>
<dbReference type="GO" id="GO:0005829">
    <property type="term" value="C:cytosol"/>
    <property type="evidence" value="ECO:0007669"/>
    <property type="project" value="TreeGrafter"/>
</dbReference>
<dbReference type="GO" id="GO:0004477">
    <property type="term" value="F:methenyltetrahydrofolate cyclohydrolase activity"/>
    <property type="evidence" value="ECO:0007669"/>
    <property type="project" value="UniProtKB-UniRule"/>
</dbReference>
<dbReference type="GO" id="GO:0004488">
    <property type="term" value="F:methylenetetrahydrofolate dehydrogenase (NADP+) activity"/>
    <property type="evidence" value="ECO:0007669"/>
    <property type="project" value="UniProtKB-UniRule"/>
</dbReference>
<dbReference type="GO" id="GO:0000105">
    <property type="term" value="P:L-histidine biosynthetic process"/>
    <property type="evidence" value="ECO:0007669"/>
    <property type="project" value="UniProtKB-KW"/>
</dbReference>
<dbReference type="GO" id="GO:0009086">
    <property type="term" value="P:methionine biosynthetic process"/>
    <property type="evidence" value="ECO:0007669"/>
    <property type="project" value="UniProtKB-KW"/>
</dbReference>
<dbReference type="GO" id="GO:0006164">
    <property type="term" value="P:purine nucleotide biosynthetic process"/>
    <property type="evidence" value="ECO:0007669"/>
    <property type="project" value="UniProtKB-KW"/>
</dbReference>
<dbReference type="GO" id="GO:0035999">
    <property type="term" value="P:tetrahydrofolate interconversion"/>
    <property type="evidence" value="ECO:0007669"/>
    <property type="project" value="UniProtKB-UniRule"/>
</dbReference>
<dbReference type="CDD" id="cd01080">
    <property type="entry name" value="NAD_bind_m-THF_DH_Cyclohyd"/>
    <property type="match status" value="1"/>
</dbReference>
<dbReference type="FunFam" id="3.40.50.720:FF:000006">
    <property type="entry name" value="Bifunctional protein FolD"/>
    <property type="match status" value="1"/>
</dbReference>
<dbReference type="FunFam" id="3.40.50.10860:FF:000005">
    <property type="entry name" value="C-1-tetrahydrofolate synthase, cytoplasmic, putative"/>
    <property type="match status" value="1"/>
</dbReference>
<dbReference type="Gene3D" id="3.40.50.10860">
    <property type="entry name" value="Leucine Dehydrogenase, chain A, domain 1"/>
    <property type="match status" value="1"/>
</dbReference>
<dbReference type="Gene3D" id="3.40.50.720">
    <property type="entry name" value="NAD(P)-binding Rossmann-like Domain"/>
    <property type="match status" value="1"/>
</dbReference>
<dbReference type="HAMAP" id="MF_01576">
    <property type="entry name" value="THF_DHG_CYH"/>
    <property type="match status" value="1"/>
</dbReference>
<dbReference type="InterPro" id="IPR046346">
    <property type="entry name" value="Aminoacid_DH-like_N_sf"/>
</dbReference>
<dbReference type="InterPro" id="IPR036291">
    <property type="entry name" value="NAD(P)-bd_dom_sf"/>
</dbReference>
<dbReference type="InterPro" id="IPR000672">
    <property type="entry name" value="THF_DH/CycHdrlase"/>
</dbReference>
<dbReference type="InterPro" id="IPR020630">
    <property type="entry name" value="THF_DH/CycHdrlase_cat_dom"/>
</dbReference>
<dbReference type="InterPro" id="IPR020867">
    <property type="entry name" value="THF_DH/CycHdrlase_CS"/>
</dbReference>
<dbReference type="InterPro" id="IPR020631">
    <property type="entry name" value="THF_DH/CycHdrlase_NAD-bd_dom"/>
</dbReference>
<dbReference type="NCBIfam" id="NF010785">
    <property type="entry name" value="PRK14188.1"/>
    <property type="match status" value="1"/>
</dbReference>
<dbReference type="PANTHER" id="PTHR48099:SF5">
    <property type="entry name" value="C-1-TETRAHYDROFOLATE SYNTHASE, CYTOPLASMIC"/>
    <property type="match status" value="1"/>
</dbReference>
<dbReference type="PANTHER" id="PTHR48099">
    <property type="entry name" value="C-1-TETRAHYDROFOLATE SYNTHASE, CYTOPLASMIC-RELATED"/>
    <property type="match status" value="1"/>
</dbReference>
<dbReference type="Pfam" id="PF00763">
    <property type="entry name" value="THF_DHG_CYH"/>
    <property type="match status" value="1"/>
</dbReference>
<dbReference type="Pfam" id="PF02882">
    <property type="entry name" value="THF_DHG_CYH_C"/>
    <property type="match status" value="1"/>
</dbReference>
<dbReference type="PRINTS" id="PR00085">
    <property type="entry name" value="THFDHDRGNASE"/>
</dbReference>
<dbReference type="SUPFAM" id="SSF53223">
    <property type="entry name" value="Aminoacid dehydrogenase-like, N-terminal domain"/>
    <property type="match status" value="1"/>
</dbReference>
<dbReference type="SUPFAM" id="SSF51735">
    <property type="entry name" value="NAD(P)-binding Rossmann-fold domains"/>
    <property type="match status" value="1"/>
</dbReference>
<dbReference type="PROSITE" id="PS00766">
    <property type="entry name" value="THF_DHG_CYH_1"/>
    <property type="match status" value="1"/>
</dbReference>
<dbReference type="PROSITE" id="PS00767">
    <property type="entry name" value="THF_DHG_CYH_2"/>
    <property type="match status" value="1"/>
</dbReference>
<protein>
    <recommendedName>
        <fullName evidence="1">Bifunctional protein FolD</fullName>
    </recommendedName>
    <domain>
        <recommendedName>
            <fullName evidence="1">Methylenetetrahydrofolate dehydrogenase</fullName>
            <ecNumber evidence="1">1.5.1.5</ecNumber>
        </recommendedName>
    </domain>
    <domain>
        <recommendedName>
            <fullName evidence="1">Methenyltetrahydrofolate cyclohydrolase</fullName>
            <ecNumber evidence="1">3.5.4.9</ecNumber>
        </recommendedName>
    </domain>
</protein>
<reference key="1">
    <citation type="journal article" date="2002" name="J. Bacteriol.">
        <title>Organization and regulation of pentachlorophenol-degrading genes in Sphingobium chlorophenolicum ATCC 39723.</title>
        <authorList>
            <person name="Cai M."/>
            <person name="Xun L."/>
        </authorList>
    </citation>
    <scope>NUCLEOTIDE SEQUENCE [GENOMIC DNA]</scope>
    <source>
        <strain>ATCC 39723 / DSM 6824 / L-1</strain>
    </source>
</reference>
<name>FOLD_SPHCR</name>
<gene>
    <name evidence="1" type="primary">folD</name>
</gene>
<sequence>MASIISGTAAAEGLLADLTRDVARFSQVHGYAPTLVAVLVGDDPASHIYVRKKIEQCRKVGMESVEHRLPADCSEEDLLALIASLNADERVHGILVQLPLPAQIDSGKVLDTIDPRKDVDGFHPVNVFRLSTGTGGLVPCTPMGCMILLRSVLPDLKGKQAVVIGKSNIVGKPVAMLLLEQGCTVTVCGRHTRNLAEVCRNADIIVAAAGTPHLVKGYWVKAGAVVIDVGINRIALDDGRSRIVGDVASDEIGHAAAFTPVPGGVGPMTIACLAAEYVQAARRRAWCWRRTNRHSFSLEGEGYGALLSGAKLGAVG</sequence>
<keyword id="KW-0028">Amino-acid biosynthesis</keyword>
<keyword id="KW-0368">Histidine biosynthesis</keyword>
<keyword id="KW-0378">Hydrolase</keyword>
<keyword id="KW-0486">Methionine biosynthesis</keyword>
<keyword id="KW-0511">Multifunctional enzyme</keyword>
<keyword id="KW-0521">NADP</keyword>
<keyword id="KW-0554">One-carbon metabolism</keyword>
<keyword id="KW-0560">Oxidoreductase</keyword>
<keyword id="KW-0658">Purine biosynthesis</keyword>